<feature type="chain" id="PRO_0000415130" description="S-methyl-5'-thioadenosine phosphorylase">
    <location>
        <begin position="1"/>
        <end position="342"/>
    </location>
</feature>
<feature type="binding site" evidence="1">
    <location>
        <position position="51"/>
    </location>
    <ligand>
        <name>phosphate</name>
        <dbReference type="ChEBI" id="CHEBI:43474"/>
    </ligand>
</feature>
<feature type="binding site" evidence="1">
    <location>
        <begin position="99"/>
        <end position="100"/>
    </location>
    <ligand>
        <name>phosphate</name>
        <dbReference type="ChEBI" id="CHEBI:43474"/>
    </ligand>
</feature>
<feature type="binding site" evidence="1">
    <location>
        <begin position="132"/>
        <end position="133"/>
    </location>
    <ligand>
        <name>phosphate</name>
        <dbReference type="ChEBI" id="CHEBI:43474"/>
    </ligand>
</feature>
<feature type="binding site" evidence="1">
    <location>
        <position position="234"/>
    </location>
    <ligand>
        <name>substrate</name>
    </ligand>
</feature>
<feature type="binding site" evidence="1">
    <location>
        <position position="235"/>
    </location>
    <ligand>
        <name>phosphate</name>
        <dbReference type="ChEBI" id="CHEBI:43474"/>
    </ligand>
</feature>
<feature type="binding site" evidence="1">
    <location>
        <begin position="258"/>
        <end position="260"/>
    </location>
    <ligand>
        <name>substrate</name>
    </ligand>
</feature>
<feature type="site" description="Important for substrate specificity" evidence="1">
    <location>
        <position position="216"/>
    </location>
</feature>
<feature type="site" description="Important for substrate specificity" evidence="1">
    <location>
        <position position="271"/>
    </location>
</feature>
<gene>
    <name type="ORF">AFUA_6G08720</name>
</gene>
<keyword id="KW-0963">Cytoplasm</keyword>
<keyword id="KW-0328">Glycosyltransferase</keyword>
<keyword id="KW-0539">Nucleus</keyword>
<keyword id="KW-0660">Purine salvage</keyword>
<keyword id="KW-1185">Reference proteome</keyword>
<keyword id="KW-0808">Transferase</keyword>
<comment type="function">
    <text evidence="1">Catalyzes the reversible phosphorylation of S-methyl-5'-thioadenosine (MTA) to adenine and 5-methylthioribose-1-phosphate. Involved in the breakdown of MTA, a major by-product of polyamine biosynthesis. Responsible for the first step in the methionine salvage pathway after MTA has been generated from S-adenosylmethionine. Has broad substrate specificity with 6-aminopurine nucleosides as preferred substrates.</text>
</comment>
<comment type="catalytic activity">
    <reaction evidence="1">
        <text>S-methyl-5'-thioadenosine + phosphate = 5-(methylsulfanyl)-alpha-D-ribose 1-phosphate + adenine</text>
        <dbReference type="Rhea" id="RHEA:11852"/>
        <dbReference type="ChEBI" id="CHEBI:16708"/>
        <dbReference type="ChEBI" id="CHEBI:17509"/>
        <dbReference type="ChEBI" id="CHEBI:43474"/>
        <dbReference type="ChEBI" id="CHEBI:58533"/>
        <dbReference type="EC" id="2.4.2.28"/>
    </reaction>
</comment>
<comment type="pathway">
    <text evidence="1">Amino-acid biosynthesis; L-methionine biosynthesis via salvage pathway; S-methyl-5-thio-alpha-D-ribose 1-phosphate from S-methyl-5'-thioadenosine (phosphorylase route): step 1/1.</text>
</comment>
<comment type="subunit">
    <text evidence="1">Homotrimer.</text>
</comment>
<comment type="subcellular location">
    <subcellularLocation>
        <location evidence="1">Cytoplasm</location>
    </subcellularLocation>
    <subcellularLocation>
        <location evidence="1">Nucleus</location>
    </subcellularLocation>
</comment>
<comment type="similarity">
    <text evidence="1">Belongs to the PNP/MTAP phosphorylase family. MTAP subfamily.</text>
</comment>
<protein>
    <recommendedName>
        <fullName evidence="1">S-methyl-5'-thioadenosine phosphorylase</fullName>
        <ecNumber evidence="1">2.4.2.28</ecNumber>
    </recommendedName>
    <alternativeName>
        <fullName evidence="1">5'-methylthioadenosine phosphorylase</fullName>
        <shortName evidence="1">MTA phosphorylase</shortName>
        <shortName evidence="1">MTAP</shortName>
        <shortName evidence="1">MTAPase</shortName>
    </alternativeName>
</protein>
<organism>
    <name type="scientific">Aspergillus fumigatus (strain ATCC MYA-4609 / CBS 101355 / FGSC A1100 / Af293)</name>
    <name type="common">Neosartorya fumigata</name>
    <dbReference type="NCBI Taxonomy" id="330879"/>
    <lineage>
        <taxon>Eukaryota</taxon>
        <taxon>Fungi</taxon>
        <taxon>Dikarya</taxon>
        <taxon>Ascomycota</taxon>
        <taxon>Pezizomycotina</taxon>
        <taxon>Eurotiomycetes</taxon>
        <taxon>Eurotiomycetidae</taxon>
        <taxon>Eurotiales</taxon>
        <taxon>Aspergillaceae</taxon>
        <taxon>Aspergillus</taxon>
        <taxon>Aspergillus subgen. Fumigati</taxon>
    </lineage>
</organism>
<name>MTAP_ASPFU</name>
<sequence length="342" mass="37606">MLGFSSLRRYLSSFTTRPLRRIESAKQLAKTMTVLPNTYDEPVRIAVIGGTGLRELPGFTQVASLSITTPWGSPSSPITILHHQCSHNNKTVAVAFLSRHGTHHQIAPHEVPARANIAALRSIGVRTIIAFSAVGSLQEEIKPRDFVIPDQVIDRTKGVRPWTFFEGGVVAHVPFGDPFDEGVAKVVRACGHSLEGEGVVLHDRGTLICMEGPQFSTRAESNLYRSWGGSVINMSCLPEAKLAREAEIAYQMICMSTDYDCWHESTADVTVEMVMGHMKANAQNARRFVTAVLDALASDEHADLVQAKHVEGSIKFGLSTAQANWSPEARAKLEWLFPGYWN</sequence>
<reference key="1">
    <citation type="journal article" date="2005" name="Nature">
        <title>Genomic sequence of the pathogenic and allergenic filamentous fungus Aspergillus fumigatus.</title>
        <authorList>
            <person name="Nierman W.C."/>
            <person name="Pain A."/>
            <person name="Anderson M.J."/>
            <person name="Wortman J.R."/>
            <person name="Kim H.S."/>
            <person name="Arroyo J."/>
            <person name="Berriman M."/>
            <person name="Abe K."/>
            <person name="Archer D.B."/>
            <person name="Bermejo C."/>
            <person name="Bennett J.W."/>
            <person name="Bowyer P."/>
            <person name="Chen D."/>
            <person name="Collins M."/>
            <person name="Coulsen R."/>
            <person name="Davies R."/>
            <person name="Dyer P.S."/>
            <person name="Farman M.L."/>
            <person name="Fedorova N."/>
            <person name="Fedorova N.D."/>
            <person name="Feldblyum T.V."/>
            <person name="Fischer R."/>
            <person name="Fosker N."/>
            <person name="Fraser A."/>
            <person name="Garcia J.L."/>
            <person name="Garcia M.J."/>
            <person name="Goble A."/>
            <person name="Goldman G.H."/>
            <person name="Gomi K."/>
            <person name="Griffith-Jones S."/>
            <person name="Gwilliam R."/>
            <person name="Haas B.J."/>
            <person name="Haas H."/>
            <person name="Harris D.E."/>
            <person name="Horiuchi H."/>
            <person name="Huang J."/>
            <person name="Humphray S."/>
            <person name="Jimenez J."/>
            <person name="Keller N."/>
            <person name="Khouri H."/>
            <person name="Kitamoto K."/>
            <person name="Kobayashi T."/>
            <person name="Konzack S."/>
            <person name="Kulkarni R."/>
            <person name="Kumagai T."/>
            <person name="Lafton A."/>
            <person name="Latge J.-P."/>
            <person name="Li W."/>
            <person name="Lord A."/>
            <person name="Lu C."/>
            <person name="Majoros W.H."/>
            <person name="May G.S."/>
            <person name="Miller B.L."/>
            <person name="Mohamoud Y."/>
            <person name="Molina M."/>
            <person name="Monod M."/>
            <person name="Mouyna I."/>
            <person name="Mulligan S."/>
            <person name="Murphy L.D."/>
            <person name="O'Neil S."/>
            <person name="Paulsen I."/>
            <person name="Penalva M.A."/>
            <person name="Pertea M."/>
            <person name="Price C."/>
            <person name="Pritchard B.L."/>
            <person name="Quail M.A."/>
            <person name="Rabbinowitsch E."/>
            <person name="Rawlins N."/>
            <person name="Rajandream M.A."/>
            <person name="Reichard U."/>
            <person name="Renauld H."/>
            <person name="Robson G.D."/>
            <person name="Rodriguez de Cordoba S."/>
            <person name="Rodriguez-Pena J.M."/>
            <person name="Ronning C.M."/>
            <person name="Rutter S."/>
            <person name="Salzberg S.L."/>
            <person name="Sanchez M."/>
            <person name="Sanchez-Ferrero J.C."/>
            <person name="Saunders D."/>
            <person name="Seeger K."/>
            <person name="Squares R."/>
            <person name="Squares S."/>
            <person name="Takeuchi M."/>
            <person name="Tekaia F."/>
            <person name="Turner G."/>
            <person name="Vazquez de Aldana C.R."/>
            <person name="Weidman J."/>
            <person name="White O."/>
            <person name="Woodward J.R."/>
            <person name="Yu J.-H."/>
            <person name="Fraser C.M."/>
            <person name="Galagan J.E."/>
            <person name="Asai K."/>
            <person name="Machida M."/>
            <person name="Hall N."/>
            <person name="Barrell B.G."/>
            <person name="Denning D.W."/>
        </authorList>
    </citation>
    <scope>NUCLEOTIDE SEQUENCE [LARGE SCALE GENOMIC DNA]</scope>
    <source>
        <strain>ATCC MYA-4609 / CBS 101355 / FGSC A1100 / Af293</strain>
    </source>
</reference>
<dbReference type="EC" id="2.4.2.28" evidence="1"/>
<dbReference type="EMBL" id="AAHF01000006">
    <property type="protein sequence ID" value="EAL88723.1"/>
    <property type="molecule type" value="Genomic_DNA"/>
</dbReference>
<dbReference type="RefSeq" id="XP_750761.1">
    <property type="nucleotide sequence ID" value="XM_745668.1"/>
</dbReference>
<dbReference type="SMR" id="Q4WMU1"/>
<dbReference type="FunCoup" id="Q4WMU1">
    <property type="interactions" value="412"/>
</dbReference>
<dbReference type="STRING" id="330879.Q4WMU1"/>
<dbReference type="EnsemblFungi" id="EAL88723">
    <property type="protein sequence ID" value="EAL88723"/>
    <property type="gene ID" value="AFUA_6G08720"/>
</dbReference>
<dbReference type="GeneID" id="3508048"/>
<dbReference type="KEGG" id="afm:AFUA_6G08720"/>
<dbReference type="VEuPathDB" id="FungiDB:Afu6g08720"/>
<dbReference type="eggNOG" id="KOG3985">
    <property type="taxonomic scope" value="Eukaryota"/>
</dbReference>
<dbReference type="HOGENOM" id="CLU_054456_0_1_1"/>
<dbReference type="InParanoid" id="Q4WMU1"/>
<dbReference type="OMA" id="ADPFCPE"/>
<dbReference type="OrthoDB" id="431409at2759"/>
<dbReference type="UniPathway" id="UPA00904">
    <property type="reaction ID" value="UER00873"/>
</dbReference>
<dbReference type="Proteomes" id="UP000002530">
    <property type="component" value="Chromosome 6"/>
</dbReference>
<dbReference type="GO" id="GO:0005829">
    <property type="term" value="C:cytosol"/>
    <property type="evidence" value="ECO:0000318"/>
    <property type="project" value="GO_Central"/>
</dbReference>
<dbReference type="GO" id="GO:0005634">
    <property type="term" value="C:nucleus"/>
    <property type="evidence" value="ECO:0007669"/>
    <property type="project" value="UniProtKB-SubCell"/>
</dbReference>
<dbReference type="GO" id="GO:0003729">
    <property type="term" value="F:mRNA binding"/>
    <property type="evidence" value="ECO:0007669"/>
    <property type="project" value="EnsemblFungi"/>
</dbReference>
<dbReference type="GO" id="GO:0017061">
    <property type="term" value="F:S-methyl-5-thioadenosine phosphorylase activity"/>
    <property type="evidence" value="ECO:0000318"/>
    <property type="project" value="GO_Central"/>
</dbReference>
<dbReference type="GO" id="GO:0006537">
    <property type="term" value="P:glutamate biosynthetic process"/>
    <property type="evidence" value="ECO:0007669"/>
    <property type="project" value="EnsemblFungi"/>
</dbReference>
<dbReference type="GO" id="GO:0019509">
    <property type="term" value="P:L-methionine salvage from methylthioadenosine"/>
    <property type="evidence" value="ECO:0000318"/>
    <property type="project" value="GO_Central"/>
</dbReference>
<dbReference type="GO" id="GO:0006166">
    <property type="term" value="P:purine ribonucleoside salvage"/>
    <property type="evidence" value="ECO:0007669"/>
    <property type="project" value="UniProtKB-KW"/>
</dbReference>
<dbReference type="CDD" id="cd09010">
    <property type="entry name" value="MTAP_SsMTAPII_like_MTIP"/>
    <property type="match status" value="1"/>
</dbReference>
<dbReference type="FunFam" id="3.40.50.1580:FF:000008">
    <property type="entry name" value="S-methyl-5'-thioadenosine phosphorylase"/>
    <property type="match status" value="1"/>
</dbReference>
<dbReference type="Gene3D" id="3.40.50.1580">
    <property type="entry name" value="Nucleoside phosphorylase domain"/>
    <property type="match status" value="1"/>
</dbReference>
<dbReference type="HAMAP" id="MF_01963">
    <property type="entry name" value="MTAP"/>
    <property type="match status" value="1"/>
</dbReference>
<dbReference type="InterPro" id="IPR010044">
    <property type="entry name" value="MTAP"/>
</dbReference>
<dbReference type="InterPro" id="IPR000845">
    <property type="entry name" value="Nucleoside_phosphorylase_d"/>
</dbReference>
<dbReference type="InterPro" id="IPR035994">
    <property type="entry name" value="Nucleoside_phosphorylase_sf"/>
</dbReference>
<dbReference type="InterPro" id="IPR018099">
    <property type="entry name" value="Purine_phosphorylase-2_CS"/>
</dbReference>
<dbReference type="NCBIfam" id="TIGR01694">
    <property type="entry name" value="MTAP"/>
    <property type="match status" value="1"/>
</dbReference>
<dbReference type="PANTHER" id="PTHR42679">
    <property type="entry name" value="S-METHYL-5'-THIOADENOSINE PHOSPHORYLASE"/>
    <property type="match status" value="1"/>
</dbReference>
<dbReference type="PANTHER" id="PTHR42679:SF2">
    <property type="entry name" value="S-METHYL-5'-THIOADENOSINE PHOSPHORYLASE"/>
    <property type="match status" value="1"/>
</dbReference>
<dbReference type="Pfam" id="PF01048">
    <property type="entry name" value="PNP_UDP_1"/>
    <property type="match status" value="1"/>
</dbReference>
<dbReference type="SUPFAM" id="SSF53167">
    <property type="entry name" value="Purine and uridine phosphorylases"/>
    <property type="match status" value="1"/>
</dbReference>
<dbReference type="PROSITE" id="PS01240">
    <property type="entry name" value="PNP_MTAP_2"/>
    <property type="match status" value="1"/>
</dbReference>
<proteinExistence type="inferred from homology"/>
<evidence type="ECO:0000255" key="1">
    <source>
        <dbReference type="HAMAP-Rule" id="MF_03155"/>
    </source>
</evidence>
<accession>Q4WMU1</accession>